<comment type="function">
    <text evidence="2">Involved in conjugal transfer of the plasmid.</text>
</comment>
<comment type="subcellular location">
    <subcellularLocation>
        <location evidence="2">Periplasm</location>
    </subcellularLocation>
</comment>
<comment type="similarity">
    <text evidence="2">Belongs to the peptidase S26C family.</text>
</comment>
<evidence type="ECO:0000255" key="1"/>
<evidence type="ECO:0000305" key="2"/>
<accession>Q44350</accession>
<organism>
    <name type="scientific">Agrobacterium fabrum (strain C58 / ATCC 33970)</name>
    <name type="common">Agrobacterium tumefaciens (strain C58)</name>
    <dbReference type="NCBI Taxonomy" id="176299"/>
    <lineage>
        <taxon>Bacteria</taxon>
        <taxon>Pseudomonadati</taxon>
        <taxon>Pseudomonadota</taxon>
        <taxon>Alphaproteobacteria</taxon>
        <taxon>Hyphomicrobiales</taxon>
        <taxon>Rhizobiaceae</taxon>
        <taxon>Rhizobium/Agrobacterium group</taxon>
        <taxon>Agrobacterium</taxon>
        <taxon>Agrobacterium tumefaciens complex</taxon>
    </lineage>
</organism>
<keyword id="KW-0184">Conjugation</keyword>
<keyword id="KW-0574">Periplasm</keyword>
<keyword id="KW-0614">Plasmid</keyword>
<keyword id="KW-1185">Reference proteome</keyword>
<keyword id="KW-0732">Signal</keyword>
<protein>
    <recommendedName>
        <fullName>Conjugal transfer protein TraF</fullName>
    </recommendedName>
</protein>
<name>TRAF_AGRFC</name>
<proteinExistence type="inferred from homology"/>
<sequence length="176" mass="18855">MSKRAVIRFLGVAGLVLSGATVMGLIGGYRVNVTPSEPLGLWRVEKLRRPVQSGDLVFVCPPHNAFFEEAWLRGYLRSGLCPGWFAPLIKSVLALPGQRVEIADRIVIDGHPVSASTVSATDSEGRAIAPFAGGVVPPGFLFLHSSFASSYDSRYFGPIPDSGLLGLARPVFTFDP</sequence>
<dbReference type="EMBL" id="AF010180">
    <property type="protein sequence ID" value="AAC17207.1"/>
    <property type="molecule type" value="Genomic_DNA"/>
</dbReference>
<dbReference type="EMBL" id="AE007871">
    <property type="protein sequence ID" value="AAK91092.1"/>
    <property type="molecule type" value="Genomic_DNA"/>
</dbReference>
<dbReference type="PIR" id="AF3243">
    <property type="entry name" value="AF3243"/>
</dbReference>
<dbReference type="PIR" id="T03420">
    <property type="entry name" value="T03420"/>
</dbReference>
<dbReference type="RefSeq" id="NP_396651.1">
    <property type="nucleotide sequence ID" value="NC_003065.3"/>
</dbReference>
<dbReference type="RefSeq" id="WP_010974897.1">
    <property type="nucleotide sequence ID" value="NC_003065.3"/>
</dbReference>
<dbReference type="MEROPS" id="S26.014"/>
<dbReference type="EnsemblBacteria" id="AAK91092">
    <property type="protein sequence ID" value="AAK91092"/>
    <property type="gene ID" value="Atu6128"/>
</dbReference>
<dbReference type="GeneID" id="1137451"/>
<dbReference type="GeneID" id="92774998"/>
<dbReference type="KEGG" id="atu:Atu6128"/>
<dbReference type="PATRIC" id="fig|176299.10.peg.5335"/>
<dbReference type="HOGENOM" id="CLU_104604_3_0_5"/>
<dbReference type="OrthoDB" id="5360818at2"/>
<dbReference type="PhylomeDB" id="Q44350"/>
<dbReference type="BioCyc" id="AGRO:ATU6128-MONOMER"/>
<dbReference type="Proteomes" id="UP000000813">
    <property type="component" value="Plasmid Ti"/>
</dbReference>
<dbReference type="GO" id="GO:0042597">
    <property type="term" value="C:periplasmic space"/>
    <property type="evidence" value="ECO:0007669"/>
    <property type="project" value="UniProtKB-SubCell"/>
</dbReference>
<dbReference type="GO" id="GO:0004252">
    <property type="term" value="F:serine-type endopeptidase activity"/>
    <property type="evidence" value="ECO:0007669"/>
    <property type="project" value="InterPro"/>
</dbReference>
<dbReference type="GO" id="GO:0006465">
    <property type="term" value="P:signal peptide processing"/>
    <property type="evidence" value="ECO:0007669"/>
    <property type="project" value="InterPro"/>
</dbReference>
<dbReference type="Gene3D" id="2.10.109.10">
    <property type="entry name" value="Umud Fragment, subunit A"/>
    <property type="match status" value="1"/>
</dbReference>
<dbReference type="InterPro" id="IPR036286">
    <property type="entry name" value="LexA/Signal_pep-like_sf"/>
</dbReference>
<dbReference type="InterPro" id="IPR019533">
    <property type="entry name" value="Peptidase_S26"/>
</dbReference>
<dbReference type="InterPro" id="IPR014139">
    <property type="entry name" value="Peptidase_S26C_TraF"/>
</dbReference>
<dbReference type="NCBIfam" id="NF010412">
    <property type="entry name" value="PRK13838.1"/>
    <property type="match status" value="1"/>
</dbReference>
<dbReference type="NCBIfam" id="TIGR02771">
    <property type="entry name" value="TraF_Ti"/>
    <property type="match status" value="1"/>
</dbReference>
<dbReference type="Pfam" id="PF10502">
    <property type="entry name" value="Peptidase_S26"/>
    <property type="match status" value="1"/>
</dbReference>
<dbReference type="SUPFAM" id="SSF51306">
    <property type="entry name" value="LexA/Signal peptidase"/>
    <property type="match status" value="1"/>
</dbReference>
<gene>
    <name type="primary">traF</name>
    <name type="ordered locus">Atu6128</name>
    <name type="ORF">AGR_pTi_240</name>
</gene>
<geneLocation type="plasmid">
    <name>pTiC58</name>
</geneLocation>
<feature type="signal peptide" evidence="1">
    <location>
        <begin position="1"/>
        <end position="24"/>
    </location>
</feature>
<feature type="chain" id="PRO_0000022577" description="Conjugal transfer protein TraF">
    <location>
        <begin position="25"/>
        <end position="176"/>
    </location>
</feature>
<reference key="1">
    <citation type="journal article" date="1996" name="J. Bacteriol.">
        <title>The tra region of the nopaline-type Ti plasmid is a chimera with elements related to the transfer systems of RSF1010, RP4, and F.</title>
        <authorList>
            <person name="Farrand S.K."/>
            <person name="Hwang I."/>
            <person name="Cook D.M."/>
        </authorList>
    </citation>
    <scope>NUCLEOTIDE SEQUENCE [GENOMIC DNA]</scope>
</reference>
<reference key="2">
    <citation type="journal article" date="2001" name="Science">
        <title>The genome of the natural genetic engineer Agrobacterium tumefaciens C58.</title>
        <authorList>
            <person name="Wood D.W."/>
            <person name="Setubal J.C."/>
            <person name="Kaul R."/>
            <person name="Monks D.E."/>
            <person name="Kitajima J.P."/>
            <person name="Okura V.K."/>
            <person name="Zhou Y."/>
            <person name="Chen L."/>
            <person name="Wood G.E."/>
            <person name="Almeida N.F. Jr."/>
            <person name="Woo L."/>
            <person name="Chen Y."/>
            <person name="Paulsen I.T."/>
            <person name="Eisen J.A."/>
            <person name="Karp P.D."/>
            <person name="Bovee D. Sr."/>
            <person name="Chapman P."/>
            <person name="Clendenning J."/>
            <person name="Deatherage G."/>
            <person name="Gillet W."/>
            <person name="Grant C."/>
            <person name="Kutyavin T."/>
            <person name="Levy R."/>
            <person name="Li M.-J."/>
            <person name="McClelland E."/>
            <person name="Palmieri A."/>
            <person name="Raymond C."/>
            <person name="Rouse G."/>
            <person name="Saenphimmachak C."/>
            <person name="Wu Z."/>
            <person name="Romero P."/>
            <person name="Gordon D."/>
            <person name="Zhang S."/>
            <person name="Yoo H."/>
            <person name="Tao Y."/>
            <person name="Biddle P."/>
            <person name="Jung M."/>
            <person name="Krespan W."/>
            <person name="Perry M."/>
            <person name="Gordon-Kamm B."/>
            <person name="Liao L."/>
            <person name="Kim S."/>
            <person name="Hendrick C."/>
            <person name="Zhao Z.-Y."/>
            <person name="Dolan M."/>
            <person name="Chumley F."/>
            <person name="Tingey S.V."/>
            <person name="Tomb J.-F."/>
            <person name="Gordon M.P."/>
            <person name="Olson M.V."/>
            <person name="Nester E.W."/>
        </authorList>
    </citation>
    <scope>NUCLEOTIDE SEQUENCE [LARGE SCALE GENOMIC DNA]</scope>
</reference>
<reference key="3">
    <citation type="journal article" date="2001" name="Science">
        <title>Genome sequence of the plant pathogen and biotechnology agent Agrobacterium tumefaciens C58.</title>
        <authorList>
            <person name="Goodner B."/>
            <person name="Hinkle G."/>
            <person name="Gattung S."/>
            <person name="Miller N."/>
            <person name="Blanchard M."/>
            <person name="Qurollo B."/>
            <person name="Goldman B.S."/>
            <person name="Cao Y."/>
            <person name="Askenazi M."/>
            <person name="Halling C."/>
            <person name="Mullin L."/>
            <person name="Houmiel K."/>
            <person name="Gordon J."/>
            <person name="Vaudin M."/>
            <person name="Iartchouk O."/>
            <person name="Epp A."/>
            <person name="Liu F."/>
            <person name="Wollam C."/>
            <person name="Allinger M."/>
            <person name="Doughty D."/>
            <person name="Scott C."/>
            <person name="Lappas C."/>
            <person name="Markelz B."/>
            <person name="Flanagan C."/>
            <person name="Crowell C."/>
            <person name="Gurson J."/>
            <person name="Lomo C."/>
            <person name="Sear C."/>
            <person name="Strub G."/>
            <person name="Cielo C."/>
            <person name="Slater S."/>
        </authorList>
    </citation>
    <scope>NUCLEOTIDE SEQUENCE [LARGE SCALE GENOMIC DNA]</scope>
    <source>
        <strain>C58 / ATCC 33970</strain>
    </source>
</reference>